<protein>
    <recommendedName>
        <fullName>PHD finger protein ING1</fullName>
    </recommendedName>
    <alternativeName>
        <fullName>Protein INHIBITOR OF GROWTH 1</fullName>
        <shortName>Protein AtING1</shortName>
    </alternativeName>
</protein>
<dbReference type="EMBL" id="AP001297">
    <property type="protein sequence ID" value="BAB03019.1"/>
    <property type="molecule type" value="Genomic_DNA"/>
</dbReference>
<dbReference type="EMBL" id="CP002686">
    <property type="protein sequence ID" value="AEE76844.1"/>
    <property type="molecule type" value="Genomic_DNA"/>
</dbReference>
<dbReference type="EMBL" id="BT024927">
    <property type="protein sequence ID" value="ABD94083.1"/>
    <property type="molecule type" value="mRNA"/>
</dbReference>
<dbReference type="EMBL" id="AB493630">
    <property type="protein sequence ID" value="BAH30468.1"/>
    <property type="molecule type" value="mRNA"/>
</dbReference>
<dbReference type="EMBL" id="AY088805">
    <property type="protein sequence ID" value="AAM67115.1"/>
    <property type="molecule type" value="mRNA"/>
</dbReference>
<dbReference type="EMBL" id="BT003957">
    <property type="protein sequence ID" value="AAO42002.1"/>
    <property type="molecule type" value="mRNA"/>
</dbReference>
<dbReference type="RefSeq" id="NP_566742.1">
    <property type="nucleotide sequence ID" value="NM_113306.4"/>
</dbReference>
<dbReference type="SMR" id="Q9LIQ6"/>
<dbReference type="BioGRID" id="7318">
    <property type="interactions" value="3"/>
</dbReference>
<dbReference type="FunCoup" id="Q9LIQ6">
    <property type="interactions" value="2921"/>
</dbReference>
<dbReference type="IntAct" id="Q9LIQ6">
    <property type="interactions" value="3"/>
</dbReference>
<dbReference type="STRING" id="3702.Q9LIQ6"/>
<dbReference type="PaxDb" id="3702-AT3G24010.1"/>
<dbReference type="ProteomicsDB" id="228866"/>
<dbReference type="EnsemblPlants" id="AT3G24010.1">
    <property type="protein sequence ID" value="AT3G24010.1"/>
    <property type="gene ID" value="AT3G24010"/>
</dbReference>
<dbReference type="GeneID" id="821986"/>
<dbReference type="Gramene" id="AT3G24010.1">
    <property type="protein sequence ID" value="AT3G24010.1"/>
    <property type="gene ID" value="AT3G24010"/>
</dbReference>
<dbReference type="KEGG" id="ath:AT3G24010"/>
<dbReference type="Araport" id="AT3G24010"/>
<dbReference type="TAIR" id="AT3G24010">
    <property type="gene designation" value="ING1"/>
</dbReference>
<dbReference type="eggNOG" id="KOG1973">
    <property type="taxonomic scope" value="Eukaryota"/>
</dbReference>
<dbReference type="HOGENOM" id="CLU_031900_4_0_1"/>
<dbReference type="InParanoid" id="Q9LIQ6"/>
<dbReference type="OMA" id="QPKGKWF"/>
<dbReference type="OrthoDB" id="5411773at2759"/>
<dbReference type="PhylomeDB" id="Q9LIQ6"/>
<dbReference type="PRO" id="PR:Q9LIQ6"/>
<dbReference type="Proteomes" id="UP000006548">
    <property type="component" value="Chromosome 3"/>
</dbReference>
<dbReference type="ExpressionAtlas" id="Q9LIQ6">
    <property type="expression patterns" value="baseline and differential"/>
</dbReference>
<dbReference type="GO" id="GO:0005634">
    <property type="term" value="C:nucleus"/>
    <property type="evidence" value="ECO:0000314"/>
    <property type="project" value="TAIR"/>
</dbReference>
<dbReference type="GO" id="GO:0035064">
    <property type="term" value="F:methylated histone binding"/>
    <property type="evidence" value="ECO:0000314"/>
    <property type="project" value="TAIR"/>
</dbReference>
<dbReference type="GO" id="GO:0008270">
    <property type="term" value="F:zinc ion binding"/>
    <property type="evidence" value="ECO:0007669"/>
    <property type="project" value="UniProtKB-KW"/>
</dbReference>
<dbReference type="GO" id="GO:0006325">
    <property type="term" value="P:chromatin organization"/>
    <property type="evidence" value="ECO:0007669"/>
    <property type="project" value="UniProtKB-KW"/>
</dbReference>
<dbReference type="CDD" id="cd17015">
    <property type="entry name" value="ING_plant"/>
    <property type="match status" value="1"/>
</dbReference>
<dbReference type="CDD" id="cd15587">
    <property type="entry name" value="PHD_Yng1p_like"/>
    <property type="match status" value="1"/>
</dbReference>
<dbReference type="FunFam" id="3.30.40.10:FF:000021">
    <property type="entry name" value="Inhibitor of growth 2b"/>
    <property type="match status" value="1"/>
</dbReference>
<dbReference type="Gene3D" id="6.10.140.1740">
    <property type="match status" value="1"/>
</dbReference>
<dbReference type="Gene3D" id="3.30.40.10">
    <property type="entry name" value="Zinc/RING finger domain, C3HC4 (zinc finger)"/>
    <property type="match status" value="1"/>
</dbReference>
<dbReference type="InterPro" id="IPR028651">
    <property type="entry name" value="ING_fam"/>
</dbReference>
<dbReference type="InterPro" id="IPR024610">
    <property type="entry name" value="ING_N_histone-binding"/>
</dbReference>
<dbReference type="InterPro" id="IPR019786">
    <property type="entry name" value="Zinc_finger_PHD-type_CS"/>
</dbReference>
<dbReference type="InterPro" id="IPR011011">
    <property type="entry name" value="Znf_FYVE_PHD"/>
</dbReference>
<dbReference type="InterPro" id="IPR001965">
    <property type="entry name" value="Znf_PHD"/>
</dbReference>
<dbReference type="InterPro" id="IPR019787">
    <property type="entry name" value="Znf_PHD-finger"/>
</dbReference>
<dbReference type="InterPro" id="IPR013083">
    <property type="entry name" value="Znf_RING/FYVE/PHD"/>
</dbReference>
<dbReference type="PANTHER" id="PTHR10333">
    <property type="entry name" value="INHIBITOR OF GROWTH PROTEIN"/>
    <property type="match status" value="1"/>
</dbReference>
<dbReference type="PANTHER" id="PTHR10333:SF103">
    <property type="entry name" value="INHIBITOR OF GROWTH PROTEIN 3"/>
    <property type="match status" value="1"/>
</dbReference>
<dbReference type="Pfam" id="PF12998">
    <property type="entry name" value="ING"/>
    <property type="match status" value="1"/>
</dbReference>
<dbReference type="Pfam" id="PF23011">
    <property type="entry name" value="PHD-1st_NSD"/>
    <property type="match status" value="1"/>
</dbReference>
<dbReference type="SMART" id="SM01408">
    <property type="entry name" value="ING"/>
    <property type="match status" value="1"/>
</dbReference>
<dbReference type="SMART" id="SM00249">
    <property type="entry name" value="PHD"/>
    <property type="match status" value="1"/>
</dbReference>
<dbReference type="SUPFAM" id="SSF57903">
    <property type="entry name" value="FYVE/PHD zinc finger"/>
    <property type="match status" value="1"/>
</dbReference>
<dbReference type="PROSITE" id="PS01359">
    <property type="entry name" value="ZF_PHD_1"/>
    <property type="match status" value="1"/>
</dbReference>
<dbReference type="PROSITE" id="PS50016">
    <property type="entry name" value="ZF_PHD_2"/>
    <property type="match status" value="1"/>
</dbReference>
<keyword id="KW-0156">Chromatin regulator</keyword>
<keyword id="KW-0341">Growth regulation</keyword>
<keyword id="KW-0479">Metal-binding</keyword>
<keyword id="KW-0539">Nucleus</keyword>
<keyword id="KW-1185">Reference proteome</keyword>
<keyword id="KW-0804">Transcription</keyword>
<keyword id="KW-0805">Transcription regulation</keyword>
<keyword id="KW-0862">Zinc</keyword>
<keyword id="KW-0863">Zinc-finger</keyword>
<name>ING1_ARATH</name>
<feature type="chain" id="PRO_0000412979" description="PHD finger protein ING1">
    <location>
        <begin position="1"/>
        <end position="234"/>
    </location>
</feature>
<feature type="zinc finger region" description="PHD-type" evidence="3">
    <location>
        <begin position="178"/>
        <end position="227"/>
    </location>
</feature>
<feature type="region of interest" description="Disordered" evidence="4">
    <location>
        <begin position="129"/>
        <end position="166"/>
    </location>
</feature>
<feature type="compositionally biased region" description="Low complexity" evidence="4">
    <location>
        <begin position="149"/>
        <end position="165"/>
    </location>
</feature>
<feature type="binding site" evidence="2">
    <location>
        <position position="181"/>
    </location>
    <ligand>
        <name>Zn(2+)</name>
        <dbReference type="ChEBI" id="CHEBI:29105"/>
        <label>1</label>
    </ligand>
</feature>
<feature type="binding site" evidence="2">
    <location>
        <position position="183"/>
    </location>
    <ligand>
        <name>Zn(2+)</name>
        <dbReference type="ChEBI" id="CHEBI:29105"/>
        <label>1</label>
    </ligand>
</feature>
<feature type="binding site" evidence="2">
    <location>
        <position position="194"/>
    </location>
    <ligand>
        <name>Zn(2+)</name>
        <dbReference type="ChEBI" id="CHEBI:29105"/>
        <label>2</label>
    </ligand>
</feature>
<feature type="binding site" evidence="2">
    <location>
        <position position="199"/>
    </location>
    <ligand>
        <name>Zn(2+)</name>
        <dbReference type="ChEBI" id="CHEBI:29105"/>
        <label>2</label>
    </ligand>
</feature>
<feature type="binding site" evidence="2">
    <location>
        <position position="205"/>
    </location>
    <ligand>
        <name>Zn(2+)</name>
        <dbReference type="ChEBI" id="CHEBI:29105"/>
        <label>1</label>
    </ligand>
</feature>
<feature type="binding site" evidence="2">
    <location>
        <position position="208"/>
    </location>
    <ligand>
        <name>Zn(2+)</name>
        <dbReference type="ChEBI" id="CHEBI:29105"/>
        <label>1</label>
    </ligand>
</feature>
<feature type="binding site" evidence="2">
    <location>
        <position position="221"/>
    </location>
    <ligand>
        <name>Zn(2+)</name>
        <dbReference type="ChEBI" id="CHEBI:29105"/>
        <label>2</label>
    </ligand>
</feature>
<feature type="binding site" evidence="2">
    <location>
        <position position="224"/>
    </location>
    <ligand>
        <name>Zn(2+)</name>
        <dbReference type="ChEBI" id="CHEBI:29105"/>
        <label>2</label>
    </ligand>
</feature>
<feature type="site" description="Histone H3K4me3 binding" evidence="2">
    <location>
        <position position="180"/>
    </location>
</feature>
<feature type="site" description="Histone H3K4me3 binding" evidence="5">
    <location>
        <position position="191"/>
    </location>
</feature>
<feature type="site" description="Histone H3K4me3 binding" evidence="5">
    <location>
        <position position="195"/>
    </location>
</feature>
<feature type="site" description="Histone H3K4me3 binding" evidence="5">
    <location>
        <position position="203"/>
    </location>
</feature>
<feature type="mutagenesis site" description="Abolishes binding to H3K4me2/3." evidence="5">
    <original>M</original>
    <variation>A</variation>
    <location>
        <position position="191"/>
    </location>
</feature>
<feature type="mutagenesis site" description="Abolishes binding to H3K4me2/3." evidence="5">
    <original>D</original>
    <variation>A</variation>
    <location>
        <position position="195"/>
    </location>
</feature>
<feature type="mutagenesis site" description="Does not affect binding to H3K4me2/3." evidence="5">
    <original>D</original>
    <variation>E</variation>
    <location>
        <position position="195"/>
    </location>
</feature>
<feature type="mutagenesis site" description="Abolishes binding to H3K4me2/3." evidence="5">
    <original>W</original>
    <variation>A</variation>
    <location>
        <position position="203"/>
    </location>
</feature>
<feature type="sequence conflict" description="In Ref. 6; AAO42002." evidence="6" ref="6">
    <original>D</original>
    <variation>G</variation>
    <location>
        <position position="111"/>
    </location>
</feature>
<sequence length="234" mass="26098">MSFAEEFEANLVSLAHVLQKKYALLRDLDKSLQENQRQNEQRCEKEIEDIRRGRAGNITPNTSLTKFSEEALDEQKHSVRIADEKVTLAMQAYDLVDMHVQQLDQYMKKSDEVIRKEKEAAAATLELENNGKAGNAGEGGRGGRKKTRLATAASTAAASTGMTSSNMDLDLPVDPNEPTYCICNQVSFGEMVACDNNACKIEWFHFGCVGLKEQPKGKWYCPECATVKKSRKGR</sequence>
<proteinExistence type="evidence at protein level"/>
<gene>
    <name type="primary">ING1</name>
    <name type="ordered locus">At3g24010</name>
    <name type="ORF">F14O13.20</name>
</gene>
<reference key="1">
    <citation type="journal article" date="2000" name="DNA Res.">
        <title>Structural analysis of Arabidopsis thaliana chromosome 3. II. Sequence features of the 4,251,695 bp regions covered by 90 P1, TAC and BAC clones.</title>
        <authorList>
            <person name="Kaneko T."/>
            <person name="Katoh T."/>
            <person name="Sato S."/>
            <person name="Nakamura Y."/>
            <person name="Asamizu E."/>
            <person name="Tabata S."/>
        </authorList>
    </citation>
    <scope>NUCLEOTIDE SEQUENCE [LARGE SCALE GENOMIC DNA]</scope>
    <source>
        <strain>cv. Columbia</strain>
    </source>
</reference>
<reference key="2">
    <citation type="journal article" date="2017" name="Plant J.">
        <title>Araport11: a complete reannotation of the Arabidopsis thaliana reference genome.</title>
        <authorList>
            <person name="Cheng C.Y."/>
            <person name="Krishnakumar V."/>
            <person name="Chan A.P."/>
            <person name="Thibaud-Nissen F."/>
            <person name="Schobel S."/>
            <person name="Town C.D."/>
        </authorList>
    </citation>
    <scope>GENOME REANNOTATION</scope>
    <source>
        <strain>cv. Columbia</strain>
    </source>
</reference>
<reference key="3">
    <citation type="submission" date="2006-03" db="EMBL/GenBank/DDBJ databases">
        <title>Arabidopsis ORF clones.</title>
        <authorList>
            <person name="Shinn P."/>
            <person name="Chen H."/>
            <person name="Kim C.J."/>
            <person name="Ecker J.R."/>
        </authorList>
    </citation>
    <scope>NUCLEOTIDE SEQUENCE [LARGE SCALE MRNA]</scope>
    <source>
        <strain>cv. Columbia</strain>
    </source>
</reference>
<reference key="4">
    <citation type="submission" date="2009-03" db="EMBL/GenBank/DDBJ databases">
        <title>ORF cloning and analysis of Arabidopsis transcription factor genes.</title>
        <authorList>
            <person name="Fujita M."/>
            <person name="Mizukado S."/>
            <person name="Seki M."/>
            <person name="Shinozaki K."/>
            <person name="Mitsuda N."/>
            <person name="Takiguchi Y."/>
            <person name="Takagi M."/>
        </authorList>
    </citation>
    <scope>NUCLEOTIDE SEQUENCE [LARGE SCALE MRNA]</scope>
</reference>
<reference key="5">
    <citation type="submission" date="2002-03" db="EMBL/GenBank/DDBJ databases">
        <title>Full-length cDNA from Arabidopsis thaliana.</title>
        <authorList>
            <person name="Brover V.V."/>
            <person name="Troukhan M.E."/>
            <person name="Alexandrov N.A."/>
            <person name="Lu Y.-P."/>
            <person name="Flavell R.B."/>
            <person name="Feldmann K.A."/>
        </authorList>
    </citation>
    <scope>NUCLEOTIDE SEQUENCE [LARGE SCALE MRNA]</scope>
</reference>
<reference key="6">
    <citation type="journal article" date="2003" name="Science">
        <title>Empirical analysis of transcriptional activity in the Arabidopsis genome.</title>
        <authorList>
            <person name="Yamada K."/>
            <person name="Lim J."/>
            <person name="Dale J.M."/>
            <person name="Chen H."/>
            <person name="Shinn P."/>
            <person name="Palm C.J."/>
            <person name="Southwick A.M."/>
            <person name="Wu H.C."/>
            <person name="Kim C.J."/>
            <person name="Nguyen M."/>
            <person name="Pham P.K."/>
            <person name="Cheuk R.F."/>
            <person name="Karlin-Newmann G."/>
            <person name="Liu S.X."/>
            <person name="Lam B."/>
            <person name="Sakano H."/>
            <person name="Wu T."/>
            <person name="Yu G."/>
            <person name="Miranda M."/>
            <person name="Quach H.L."/>
            <person name="Tripp M."/>
            <person name="Chang C.H."/>
            <person name="Lee J.M."/>
            <person name="Toriumi M.J."/>
            <person name="Chan M.M."/>
            <person name="Tang C.C."/>
            <person name="Onodera C.S."/>
            <person name="Deng J.M."/>
            <person name="Akiyama K."/>
            <person name="Ansari Y."/>
            <person name="Arakawa T."/>
            <person name="Banh J."/>
            <person name="Banno F."/>
            <person name="Bowser L."/>
            <person name="Brooks S.Y."/>
            <person name="Carninci P."/>
            <person name="Chao Q."/>
            <person name="Choy N."/>
            <person name="Enju A."/>
            <person name="Goldsmith A.D."/>
            <person name="Gurjal M."/>
            <person name="Hansen N.F."/>
            <person name="Hayashizaki Y."/>
            <person name="Johnson-Hopson C."/>
            <person name="Hsuan V.W."/>
            <person name="Iida K."/>
            <person name="Karnes M."/>
            <person name="Khan S."/>
            <person name="Koesema E."/>
            <person name="Ishida J."/>
            <person name="Jiang P.X."/>
            <person name="Jones T."/>
            <person name="Kawai J."/>
            <person name="Kamiya A."/>
            <person name="Meyers C."/>
            <person name="Nakajima M."/>
            <person name="Narusaka M."/>
            <person name="Seki M."/>
            <person name="Sakurai T."/>
            <person name="Satou M."/>
            <person name="Tamse R."/>
            <person name="Vaysberg M."/>
            <person name="Wallender E.K."/>
            <person name="Wong C."/>
            <person name="Yamamura Y."/>
            <person name="Yuan S."/>
            <person name="Shinozaki K."/>
            <person name="Davis R.W."/>
            <person name="Theologis A."/>
            <person name="Ecker J.R."/>
        </authorList>
    </citation>
    <scope>NUCLEOTIDE SEQUENCE [LARGE SCALE MRNA] OF 75-234</scope>
    <source>
        <strain>cv. Columbia</strain>
    </source>
</reference>
<reference key="7">
    <citation type="journal article" date="2009" name="Plant J.">
        <title>Arabidopsis ING and Alfin1-like protein families localize to the nucleus and bind to H3K4me3/2 via plant homeodomain fingers.</title>
        <authorList>
            <person name="Lee W.Y."/>
            <person name="Lee D."/>
            <person name="Chung W.I."/>
            <person name="Kwon C.S."/>
        </authorList>
    </citation>
    <scope>GENE FAMILY</scope>
    <scope>DOMAIN PHD-TYPE ZINC-FINGER</scope>
    <scope>SUBCELLULAR LOCATION</scope>
    <scope>INTERACTION WITH HISTONES H3K4ME3 AND H3K4ME2</scope>
    <scope>TISSUE SPECIFICITY</scope>
    <scope>MUTAGENESIS OF MET-191; ASP-195 AND TRP-203</scope>
</reference>
<comment type="function">
    <text evidence="1">Histone-binding component that specifically recognizes H3 tails trimethylated on 'Lys-4' (H3K4me3), which mark transcription start sites of virtually all active genes.</text>
</comment>
<comment type="subunit">
    <text evidence="5">Interacts with H3K4me3 and to a lesser extent with H3K4me2.</text>
</comment>
<comment type="subcellular location">
    <subcellularLocation>
        <location evidence="5">Nucleus</location>
    </subcellularLocation>
</comment>
<comment type="tissue specificity">
    <text evidence="5">Ubiquitously expressed.</text>
</comment>
<comment type="domain">
    <text evidence="5">The PHD-type zinc finger mediates the binding to H3K4me3.</text>
</comment>
<comment type="similarity">
    <text evidence="6">Belongs to the ING family.</text>
</comment>
<organism>
    <name type="scientific">Arabidopsis thaliana</name>
    <name type="common">Mouse-ear cress</name>
    <dbReference type="NCBI Taxonomy" id="3702"/>
    <lineage>
        <taxon>Eukaryota</taxon>
        <taxon>Viridiplantae</taxon>
        <taxon>Streptophyta</taxon>
        <taxon>Embryophyta</taxon>
        <taxon>Tracheophyta</taxon>
        <taxon>Spermatophyta</taxon>
        <taxon>Magnoliopsida</taxon>
        <taxon>eudicotyledons</taxon>
        <taxon>Gunneridae</taxon>
        <taxon>Pentapetalae</taxon>
        <taxon>rosids</taxon>
        <taxon>malvids</taxon>
        <taxon>Brassicales</taxon>
        <taxon>Brassicaceae</taxon>
        <taxon>Camelineae</taxon>
        <taxon>Arabidopsis</taxon>
    </lineage>
</organism>
<accession>Q9LIQ6</accession>
<accession>Q84WD2</accession>
<evidence type="ECO:0000250" key="1"/>
<evidence type="ECO:0000250" key="2">
    <source>
        <dbReference type="UniProtKB" id="Q9UK53"/>
    </source>
</evidence>
<evidence type="ECO:0000255" key="3">
    <source>
        <dbReference type="PROSITE-ProRule" id="PRU00146"/>
    </source>
</evidence>
<evidence type="ECO:0000256" key="4">
    <source>
        <dbReference type="SAM" id="MobiDB-lite"/>
    </source>
</evidence>
<evidence type="ECO:0000269" key="5">
    <source>
    </source>
</evidence>
<evidence type="ECO:0000305" key="6"/>